<comment type="function">
    <text evidence="4 8">Component of the large ribosomal subunit (PubMed:27863242, PubMed:30517857). The ribosome is a large ribonucleoprotein complex responsible for the synthesis of proteins in the cell (PubMed:27863242, PubMed:30517857).</text>
</comment>
<comment type="subunit">
    <text evidence="4 5 6 7 8 9 10 11 12 13 14 15">Component of the large ribosomal subunit.</text>
</comment>
<comment type="subcellular location">
    <subcellularLocation>
        <location evidence="4 5 6 7 8 9 10 11 12 13 14 15">Cytoplasm</location>
    </subcellularLocation>
</comment>
<comment type="PTM">
    <text evidence="1">Mono-ADP-ribosylation at Glu-4 by PARP16 inhibits polysome assembly and mRNA loading, thereby inhibiting protein translation.</text>
</comment>
<comment type="similarity">
    <text evidence="16">Belongs to the eukaryotic ribosomal protein eL24 family.</text>
</comment>
<protein>
    <recommendedName>
        <fullName>Large ribosomal subunit protein eL24</fullName>
    </recommendedName>
    <alternativeName>
        <fullName>60S ribosomal protein L24</fullName>
    </alternativeName>
</protein>
<evidence type="ECO:0000250" key="1">
    <source>
        <dbReference type="UniProtKB" id="P83731"/>
    </source>
</evidence>
<evidence type="ECO:0000250" key="2">
    <source>
        <dbReference type="UniProtKB" id="Q8BP67"/>
    </source>
</evidence>
<evidence type="ECO:0000256" key="3">
    <source>
        <dbReference type="SAM" id="MobiDB-lite"/>
    </source>
</evidence>
<evidence type="ECO:0000269" key="4">
    <source>
    </source>
</evidence>
<evidence type="ECO:0000269" key="5">
    <source>
    </source>
</evidence>
<evidence type="ECO:0000269" key="6">
    <source>
    </source>
</evidence>
<evidence type="ECO:0000269" key="7">
    <source>
    </source>
</evidence>
<evidence type="ECO:0000269" key="8">
    <source>
    </source>
</evidence>
<evidence type="ECO:0000269" key="9">
    <source>
    </source>
</evidence>
<evidence type="ECO:0000269" key="10">
    <source>
    </source>
</evidence>
<evidence type="ECO:0000269" key="11">
    <source>
    </source>
</evidence>
<evidence type="ECO:0000269" key="12">
    <source>
    </source>
</evidence>
<evidence type="ECO:0000269" key="13">
    <source>
    </source>
</evidence>
<evidence type="ECO:0000269" key="14">
    <source>
    </source>
</evidence>
<evidence type="ECO:0000269" key="15">
    <source>
    </source>
</evidence>
<evidence type="ECO:0000305" key="16"/>
<evidence type="ECO:0007744" key="17">
    <source>
        <dbReference type="PDB" id="5LZS"/>
    </source>
</evidence>
<evidence type="ECO:0007744" key="18">
    <source>
        <dbReference type="PDB" id="5LZT"/>
    </source>
</evidence>
<evidence type="ECO:0007744" key="19">
    <source>
        <dbReference type="PDB" id="6D90"/>
    </source>
</evidence>
<evidence type="ECO:0007744" key="20">
    <source>
        <dbReference type="PDB" id="6D9J"/>
    </source>
</evidence>
<evidence type="ECO:0007744" key="21">
    <source>
        <dbReference type="PDB" id="6GZ3"/>
    </source>
</evidence>
<evidence type="ECO:0007744" key="22">
    <source>
        <dbReference type="PDB" id="6HCF"/>
    </source>
</evidence>
<evidence type="ECO:0007744" key="23">
    <source>
        <dbReference type="PDB" id="6MTB"/>
    </source>
</evidence>
<evidence type="ECO:0007744" key="24">
    <source>
        <dbReference type="PDB" id="6MTC"/>
    </source>
</evidence>
<evidence type="ECO:0007744" key="25">
    <source>
        <dbReference type="PDB" id="6P5I"/>
    </source>
</evidence>
<evidence type="ECO:0007744" key="26">
    <source>
        <dbReference type="PDB" id="6P5J"/>
    </source>
</evidence>
<evidence type="ECO:0007744" key="27">
    <source>
        <dbReference type="PDB" id="6R5Q"/>
    </source>
</evidence>
<evidence type="ECO:0007744" key="28">
    <source>
        <dbReference type="PDB" id="6R6G"/>
    </source>
</evidence>
<evidence type="ECO:0007744" key="29">
    <source>
        <dbReference type="PDB" id="6SGC"/>
    </source>
</evidence>
<evidence type="ECO:0007744" key="30">
    <source>
        <dbReference type="PDB" id="6ZVK"/>
    </source>
</evidence>
<evidence type="ECO:0007744" key="31">
    <source>
        <dbReference type="PDB" id="7A01"/>
    </source>
</evidence>
<evidence type="ECO:0007744" key="32">
    <source>
        <dbReference type="PDB" id="7OYD"/>
    </source>
</evidence>
<evidence type="ECO:0007744" key="33">
    <source>
        <dbReference type="PDB" id="7UCJ"/>
    </source>
</evidence>
<evidence type="ECO:0007744" key="34">
    <source>
        <dbReference type="PDB" id="7UCK"/>
    </source>
</evidence>
<evidence type="ECO:0007744" key="35">
    <source>
        <dbReference type="PDB" id="7ZJW"/>
    </source>
</evidence>
<evidence type="ECO:0007744" key="36">
    <source>
        <dbReference type="PDB" id="7ZJX"/>
    </source>
</evidence>
<gene>
    <name type="primary">RPL24</name>
</gene>
<reference key="1">
    <citation type="journal article" date="2011" name="Nature">
        <title>A high-resolution map of human evolutionary constraint using 29 mammals.</title>
        <authorList>
            <person name="Lindblad-Toh K."/>
            <person name="Garber M."/>
            <person name="Zuk O."/>
            <person name="Lin M.F."/>
            <person name="Parker B.J."/>
            <person name="Washietl S."/>
            <person name="Kheradpour P."/>
            <person name="Ernst J."/>
            <person name="Jordan G."/>
            <person name="Mauceli E."/>
            <person name="Ward L.D."/>
            <person name="Lowe C.B."/>
            <person name="Holloway A.K."/>
            <person name="Clamp M."/>
            <person name="Gnerre S."/>
            <person name="Alfoldi J."/>
            <person name="Beal K."/>
            <person name="Chang J."/>
            <person name="Clawson H."/>
            <person name="Cuff J."/>
            <person name="Di Palma F."/>
            <person name="Fitzgerald S."/>
            <person name="Flicek P."/>
            <person name="Guttman M."/>
            <person name="Hubisz M.J."/>
            <person name="Jaffe D.B."/>
            <person name="Jungreis I."/>
            <person name="Kent W.J."/>
            <person name="Kostka D."/>
            <person name="Lara M."/>
            <person name="Martins A.L."/>
            <person name="Massingham T."/>
            <person name="Moltke I."/>
            <person name="Raney B.J."/>
            <person name="Rasmussen M.D."/>
            <person name="Robinson J."/>
            <person name="Stark A."/>
            <person name="Vilella A.J."/>
            <person name="Wen J."/>
            <person name="Xie X."/>
            <person name="Zody M.C."/>
            <person name="Baldwin J."/>
            <person name="Bloom T."/>
            <person name="Chin C.W."/>
            <person name="Heiman D."/>
            <person name="Nicol R."/>
            <person name="Nusbaum C."/>
            <person name="Young S."/>
            <person name="Wilkinson J."/>
            <person name="Worley K.C."/>
            <person name="Kovar C.L."/>
            <person name="Muzny D.M."/>
            <person name="Gibbs R.A."/>
            <person name="Cree A."/>
            <person name="Dihn H.H."/>
            <person name="Fowler G."/>
            <person name="Jhangiani S."/>
            <person name="Joshi V."/>
            <person name="Lee S."/>
            <person name="Lewis L.R."/>
            <person name="Nazareth L.V."/>
            <person name="Okwuonu G."/>
            <person name="Santibanez J."/>
            <person name="Warren W.C."/>
            <person name="Mardis E.R."/>
            <person name="Weinstock G.M."/>
            <person name="Wilson R.K."/>
            <person name="Delehaunty K."/>
            <person name="Dooling D."/>
            <person name="Fronik C."/>
            <person name="Fulton L."/>
            <person name="Fulton B."/>
            <person name="Graves T."/>
            <person name="Minx P."/>
            <person name="Sodergren E."/>
            <person name="Birney E."/>
            <person name="Margulies E.H."/>
            <person name="Herrero J."/>
            <person name="Green E.D."/>
            <person name="Haussler D."/>
            <person name="Siepel A."/>
            <person name="Goldman N."/>
            <person name="Pollard K.S."/>
            <person name="Pedersen J.S."/>
            <person name="Lander E.S."/>
            <person name="Kellis M."/>
        </authorList>
    </citation>
    <scope>NUCLEOTIDE SEQUENCE [LARGE SCALE GENOMIC DNA]</scope>
    <source>
        <strain>Thorbecke</strain>
    </source>
</reference>
<reference evidence="17 18" key="2">
    <citation type="journal article" date="2016" name="Cell">
        <title>Decoding mammalian ribosome-mRNA states by translational GTPase complexes.</title>
        <authorList>
            <person name="Shao S."/>
            <person name="Murray J."/>
            <person name="Brown A."/>
            <person name="Taunton J."/>
            <person name="Ramakrishnan V."/>
            <person name="Hegde R.S."/>
        </authorList>
    </citation>
    <scope>STRUCTURE BY ELECTRON MICROSCOPY (3.31 ANGSTROMS) OF RIBOSOME</scope>
    <scope>FUNCTION</scope>
    <scope>SUBCELLULAR LOCATION</scope>
    <scope>SUBUNIT</scope>
</reference>
<reference evidence="21" key="3">
    <citation type="journal article" date="2018" name="Cell Rep.">
        <title>tRNA translocation by the eukaryotic 80S ribosome and the impact of GTP hydrolysis.</title>
        <authorList>
            <person name="Flis J."/>
            <person name="Holm M."/>
            <person name="Rundlet E.J."/>
            <person name="Loerke J."/>
            <person name="Hilal T."/>
            <person name="Dabrowski M."/>
            <person name="Burger J."/>
            <person name="Mielke T."/>
            <person name="Blanchard S.C."/>
            <person name="Spahn C.M.T."/>
            <person name="Budkevich T.V."/>
        </authorList>
    </citation>
    <scope>STRUCTURE BY ELECTRON MICROSCOPY (3.60 ANGSTROMS) OF 1-122 OF RIBOSOME</scope>
    <scope>FUNCTION</scope>
    <scope>SUBCELLULAR LOCATION</scope>
    <scope>SUBUNIT</scope>
</reference>
<reference evidence="19 20" key="4">
    <citation type="journal article" date="2018" name="Elife">
        <title>Dual tRNA mimicry in the Cricket paralysis virus IRES uncovers an unexpected similarity with the Hepatitis C Virus IRES.</title>
        <authorList>
            <person name="Pisareva V.P."/>
            <person name="Pisarev A.V."/>
            <person name="Fernandez I.S."/>
        </authorList>
    </citation>
    <scope>STRUCTURE BY ELECTRON MICROSCOPY (3.20 ANGSTROMS) OF RIBOSOME</scope>
    <scope>SUBCELLULAR LOCATION</scope>
    <scope>SUBUNIT</scope>
</reference>
<reference evidence="23 24" key="5">
    <citation type="journal article" date="2018" name="Elife">
        <title>Structures of translationally inactive mammalian ribosomes.</title>
        <authorList>
            <person name="Brown A."/>
            <person name="Baird M.R."/>
            <person name="Yip M.C."/>
            <person name="Murray J."/>
            <person name="Shao S."/>
        </authorList>
    </citation>
    <scope>STRUCTURE BY ELECTRON MICROSCOPY (3.30 ANGSTROMS) OF 18-124 OF RIBOSOME</scope>
    <scope>SUBCELLULAR LOCATION</scope>
    <scope>SUBUNIT</scope>
</reference>
<reference evidence="22" key="6">
    <citation type="journal article" date="2018" name="Mol. Cell">
        <title>ZNF598 is a quality control sensor of collided ribosomes.</title>
        <authorList>
            <person name="Juszkiewicz S."/>
            <person name="Chandrasekaran V."/>
            <person name="Lin Z."/>
            <person name="Kraatz S."/>
            <person name="Ramakrishnan V."/>
            <person name="Hegde R.S."/>
        </authorList>
    </citation>
    <scope>STRUCTURE BY ELECTRON MICROSCOPY (3.80 ANGSTROMS) OF RIBOSOME</scope>
    <scope>SUBCELLULAR LOCATION</scope>
    <scope>SUBUNIT</scope>
</reference>
<reference evidence="27 28" key="7">
    <citation type="journal article" date="2019" name="Elife">
        <title>Structural and mutational analysis of the ribosome-arresting human XBP1u.</title>
        <authorList>
            <person name="Shanmuganathan V."/>
            <person name="Schiller N."/>
            <person name="Magoulopoulou A."/>
            <person name="Cheng J."/>
            <person name="Braunger K."/>
            <person name="Cymer F."/>
            <person name="Berninghausen O."/>
            <person name="Beatrix B."/>
            <person name="Kohno K."/>
            <person name="von Heijne G."/>
            <person name="Beckmann R."/>
        </authorList>
    </citation>
    <scope>STRUCTURE BY ELECTRON MICROSCOPY (3.00 ANGSTROMS) OF 1-121 OF RIBOSOME</scope>
    <scope>SUBCELLULAR LOCATION</scope>
    <scope>SUBUNIT</scope>
</reference>
<reference evidence="25 26" key="8">
    <citation type="journal article" date="2019" name="EMBO J.">
        <title>The Israeli acute paralysis virus IRES captures host ribosomes by mimicking a ribosomal state with hybrid tRNAs.</title>
        <authorList>
            <person name="Acosta-Reyes F."/>
            <person name="Neupane R."/>
            <person name="Frank J."/>
            <person name="Fernandez I.S."/>
        </authorList>
    </citation>
    <scope>STRUCTURE BY ELECTRON MICROSCOPY (3.10 ANGSTROMS) OF RIBOSOME</scope>
    <scope>SUBCELLULAR LOCATION</scope>
    <scope>SUBUNIT</scope>
</reference>
<reference evidence="29" key="9">
    <citation type="journal article" date="2019" name="Nat. Struct. Mol. Biol.">
        <title>Mechanism of ribosome stalling during translation of a poly(A) tail.</title>
        <authorList>
            <person name="Chandrasekaran V."/>
            <person name="Juszkiewicz S."/>
            <person name="Choi J."/>
            <person name="Puglisi J.D."/>
            <person name="Brown A."/>
            <person name="Shao S."/>
            <person name="Ramakrishnan V."/>
            <person name="Hegde R.S."/>
        </authorList>
    </citation>
    <scope>STRUCTURE BY ELECTRON MICROSCOPY (2.80 ANGSTROMS) OF RIBOSOME</scope>
    <scope>SUBCELLULAR LOCATION</scope>
    <scope>SUBUNIT</scope>
</reference>
<reference evidence="30 31" key="10">
    <citation type="journal article" date="2020" name="Cell Rep.">
        <title>The Halastavi arva virus intergenic region IRES promotes translation by the simplest possible initiation mechanism.</title>
        <authorList>
            <person name="Abaeva I.S."/>
            <person name="Vicens Q."/>
            <person name="Bochler A."/>
            <person name="Soufari H."/>
            <person name="Simonetti A."/>
            <person name="Pestova T.V."/>
            <person name="Hashem Y."/>
            <person name="Hellen C.U.T."/>
        </authorList>
    </citation>
    <scope>STRUCTURE BY ELECTRON MICROSCOPY (3.49 ANGSTROMS) OF 21-233 OF RIBOSOME</scope>
    <scope>SUBCELLULAR LOCATION</scope>
    <scope>SUBUNIT</scope>
</reference>
<reference evidence="33 34" key="11">
    <citation type="journal article" date="2022" name="Mol. Cell">
        <title>Direct epitranscriptomic regulation of mammalian translation initiation through N4-acetylcytidine.</title>
        <authorList>
            <person name="Arango D."/>
            <person name="Sturgill D."/>
            <person name="Yang R."/>
            <person name="Kanai T."/>
            <person name="Bauer P."/>
            <person name="Roy J."/>
            <person name="Wang Z."/>
            <person name="Hosogane M."/>
            <person name="Schiffers S."/>
            <person name="Oberdoerffer S."/>
        </authorList>
    </citation>
    <scope>STRUCTURE BY ELECTRON MICROSCOPY (2.80 ANGSTROMS) OF 1-121 OF RIBOSOME</scope>
    <scope>SUBCELLULAR LOCATION</scope>
    <scope>SUBUNIT</scope>
</reference>
<reference evidence="35 36" key="12">
    <citation type="journal article" date="2022" name="Science">
        <title>Structure of the mammalian ribosome as it decodes the selenocysteine UGA codon.</title>
        <authorList>
            <person name="Hilal T."/>
            <person name="Killam B.Y."/>
            <person name="Grozdanovic M."/>
            <person name="Dobosz-Bartoszek M."/>
            <person name="Loerke J."/>
            <person name="Buerger J."/>
            <person name="Mielke T."/>
            <person name="Copeland P.R."/>
            <person name="Simonovic M."/>
            <person name="Spahn C.M.T."/>
        </authorList>
    </citation>
    <scope>STRUCTURE BY ELECTRON MICROSCOPY (2.80 ANGSTROMS) OF RIBOSOME</scope>
    <scope>SUBCELLULAR LOCATION</scope>
    <scope>SUBUNIT</scope>
</reference>
<reference evidence="32" key="13">
    <citation type="journal article" date="2023" name="Nature">
        <title>A molecular network of conserved factors keeps ribosomes dormant in the egg.</title>
        <authorList>
            <person name="Leesch F."/>
            <person name="Lorenzo-Orts L."/>
            <person name="Pribitzer C."/>
            <person name="Grishkovskaya I."/>
            <person name="Roehsner J."/>
            <person name="Chugunova A."/>
            <person name="Matzinger M."/>
            <person name="Roitinger E."/>
            <person name="Belacic K."/>
            <person name="Kandolf S."/>
            <person name="Lin T.Y."/>
            <person name="Mechtler K."/>
            <person name="Meinhart A."/>
            <person name="Haselbach D."/>
            <person name="Pauli A."/>
        </authorList>
    </citation>
    <scope>STRUCTURE BY ELECTRON MICROSCOPY (2.30 ANGSTROMS) OF RIBOSOME</scope>
    <scope>SUBCELLULAR LOCATION</scope>
    <scope>SUBUNIT</scope>
</reference>
<sequence>MKVELCSFSGYKIYPGHGRRYARTDGKVFQFLNAKCESAFLSKRNPRQINWTVLYRRKHKKGQSEEIQKKRTRRAVKFQRAITGASLADIMAKRNQKPEVRKAQREQAIRAAKEAKKAKQASKKTAMAAAKAPTKAAPKQKIVKPVKVSAPRVGGKR</sequence>
<proteinExistence type="evidence at protein level"/>
<name>RL24_RABIT</name>
<keyword id="KW-0002">3D-structure</keyword>
<keyword id="KW-0007">Acetylation</keyword>
<keyword id="KW-0013">ADP-ribosylation</keyword>
<keyword id="KW-0963">Cytoplasm</keyword>
<keyword id="KW-1017">Isopeptide bond</keyword>
<keyword id="KW-0597">Phosphoprotein</keyword>
<keyword id="KW-1185">Reference proteome</keyword>
<keyword id="KW-0687">Ribonucleoprotein</keyword>
<keyword id="KW-0689">Ribosomal protein</keyword>
<keyword id="KW-0832">Ubl conjugation</keyword>
<organism>
    <name type="scientific">Oryctolagus cuniculus</name>
    <name type="common">Rabbit</name>
    <dbReference type="NCBI Taxonomy" id="9986"/>
    <lineage>
        <taxon>Eukaryota</taxon>
        <taxon>Metazoa</taxon>
        <taxon>Chordata</taxon>
        <taxon>Craniata</taxon>
        <taxon>Vertebrata</taxon>
        <taxon>Euteleostomi</taxon>
        <taxon>Mammalia</taxon>
        <taxon>Eutheria</taxon>
        <taxon>Euarchontoglires</taxon>
        <taxon>Glires</taxon>
        <taxon>Lagomorpha</taxon>
        <taxon>Leporidae</taxon>
        <taxon>Oryctolagus</taxon>
    </lineage>
</organism>
<accession>G1SE28</accession>
<feature type="chain" id="PRO_0000460115" description="Large ribosomal subunit protein eL24">
    <location>
        <begin position="1"/>
        <end position="157"/>
    </location>
</feature>
<feature type="region of interest" description="Disordered" evidence="3">
    <location>
        <begin position="106"/>
        <end position="157"/>
    </location>
</feature>
<feature type="compositionally biased region" description="Basic and acidic residues" evidence="3">
    <location>
        <begin position="106"/>
        <end position="117"/>
    </location>
</feature>
<feature type="compositionally biased region" description="Low complexity" evidence="3">
    <location>
        <begin position="123"/>
        <end position="140"/>
    </location>
</feature>
<feature type="modified residue" description="ADP-ribosyl glutamic acid" evidence="1">
    <location>
        <position position="4"/>
    </location>
</feature>
<feature type="modified residue" description="N6-acetyllysine; alternate" evidence="1">
    <location>
        <position position="27"/>
    </location>
</feature>
<feature type="modified residue" description="N6-acetyllysine" evidence="1">
    <location>
        <position position="77"/>
    </location>
</feature>
<feature type="modified residue" description="Phosphothreonine" evidence="1">
    <location>
        <position position="83"/>
    </location>
</feature>
<feature type="modified residue" description="Phosphoserine" evidence="1">
    <location>
        <position position="86"/>
    </location>
</feature>
<feature type="modified residue" description="N6-acetyllysine" evidence="1">
    <location>
        <position position="93"/>
    </location>
</feature>
<feature type="modified residue" description="N6-succinyllysine" evidence="2">
    <location>
        <position position="131"/>
    </location>
</feature>
<feature type="modified residue" description="Phosphoserine" evidence="1">
    <location>
        <position position="149"/>
    </location>
</feature>
<feature type="cross-link" description="Glycyl lysine isopeptide (Lys-Gly) (interchain with G-Cter in SUMO2)" evidence="1">
    <location>
        <position position="2"/>
    </location>
</feature>
<feature type="cross-link" description="Glycyl lysine isopeptide (Lys-Gly) (interchain with G-Cter in SUMO2); alternate" evidence="1">
    <location>
        <position position="27"/>
    </location>
</feature>
<feature type="cross-link" description="Glycyl lysine isopeptide (Lys-Gly) (interchain with G-Cter in SUMO2)" evidence="1">
    <location>
        <position position="35"/>
    </location>
</feature>
<feature type="cross-link" description="Glycyl lysine isopeptide (Lys-Gly) (interchain with G-Cter in SUMO2)" evidence="1">
    <location>
        <position position="147"/>
    </location>
</feature>
<dbReference type="EMBL" id="AAGW02016130">
    <property type="status" value="NOT_ANNOTATED_CDS"/>
    <property type="molecule type" value="Genomic_DNA"/>
</dbReference>
<dbReference type="RefSeq" id="XP_002716775.1">
    <property type="nucleotide sequence ID" value="XM_002716729.5"/>
</dbReference>
<dbReference type="PDB" id="5LZS">
    <property type="method" value="EM"/>
    <property type="resolution" value="3.31 A"/>
    <property type="chains" value="W=1-157"/>
</dbReference>
<dbReference type="PDB" id="5LZT">
    <property type="method" value="EM"/>
    <property type="resolution" value="3.65 A"/>
    <property type="chains" value="W=1-157"/>
</dbReference>
<dbReference type="PDB" id="5LZU">
    <property type="method" value="EM"/>
    <property type="resolution" value="3.75 A"/>
    <property type="chains" value="W=1-157"/>
</dbReference>
<dbReference type="PDB" id="5LZV">
    <property type="method" value="EM"/>
    <property type="resolution" value="3.35 A"/>
    <property type="chains" value="W=1-157"/>
</dbReference>
<dbReference type="PDB" id="5LZW">
    <property type="method" value="EM"/>
    <property type="resolution" value="3.53 A"/>
    <property type="chains" value="W=1-157"/>
</dbReference>
<dbReference type="PDB" id="5LZX">
    <property type="method" value="EM"/>
    <property type="resolution" value="3.67 A"/>
    <property type="chains" value="W=1-157"/>
</dbReference>
<dbReference type="PDB" id="5LZY">
    <property type="method" value="EM"/>
    <property type="resolution" value="3.99 A"/>
    <property type="chains" value="W=1-157"/>
</dbReference>
<dbReference type="PDB" id="5LZZ">
    <property type="method" value="EM"/>
    <property type="resolution" value="3.47 A"/>
    <property type="chains" value="W=1-157"/>
</dbReference>
<dbReference type="PDB" id="6D90">
    <property type="method" value="EM"/>
    <property type="resolution" value="3.20 A"/>
    <property type="chains" value="W=1-157"/>
</dbReference>
<dbReference type="PDB" id="6D9J">
    <property type="method" value="EM"/>
    <property type="resolution" value="3.20 A"/>
    <property type="chains" value="W=1-157"/>
</dbReference>
<dbReference type="PDB" id="6FTG">
    <property type="method" value="EM"/>
    <property type="resolution" value="9.10 A"/>
    <property type="chains" value="W=1-63"/>
</dbReference>
<dbReference type="PDB" id="6FTI">
    <property type="method" value="EM"/>
    <property type="resolution" value="4.20 A"/>
    <property type="chains" value="W=1-63"/>
</dbReference>
<dbReference type="PDB" id="6FTJ">
    <property type="method" value="EM"/>
    <property type="resolution" value="4.70 A"/>
    <property type="chains" value="W=1-63"/>
</dbReference>
<dbReference type="PDB" id="6GZ3">
    <property type="method" value="EM"/>
    <property type="resolution" value="3.60 A"/>
    <property type="chains" value="AW=2-122"/>
</dbReference>
<dbReference type="PDB" id="6HCF">
    <property type="method" value="EM"/>
    <property type="resolution" value="3.90 A"/>
    <property type="chains" value="W3=1-157"/>
</dbReference>
<dbReference type="PDB" id="6HCM">
    <property type="method" value="EM"/>
    <property type="resolution" value="6.80 A"/>
    <property type="chains" value="W3=1-157"/>
</dbReference>
<dbReference type="PDB" id="6MTB">
    <property type="method" value="EM"/>
    <property type="resolution" value="3.60 A"/>
    <property type="chains" value="W=1-157"/>
</dbReference>
<dbReference type="PDB" id="6MTC">
    <property type="method" value="EM"/>
    <property type="resolution" value="3.40 A"/>
    <property type="chains" value="W=1-157"/>
</dbReference>
<dbReference type="PDB" id="6MTD">
    <property type="method" value="EM"/>
    <property type="resolution" value="3.30 A"/>
    <property type="chains" value="W=1-157"/>
</dbReference>
<dbReference type="PDB" id="6MTE">
    <property type="method" value="EM"/>
    <property type="resolution" value="3.40 A"/>
    <property type="chains" value="W=1-157"/>
</dbReference>
<dbReference type="PDB" id="6P5I">
    <property type="method" value="EM"/>
    <property type="resolution" value="3.10 A"/>
    <property type="chains" value="AW=1-157"/>
</dbReference>
<dbReference type="PDB" id="6P5J">
    <property type="method" value="EM"/>
    <property type="resolution" value="3.10 A"/>
    <property type="chains" value="AW=1-157"/>
</dbReference>
<dbReference type="PDB" id="6P5K">
    <property type="method" value="EM"/>
    <property type="resolution" value="3.10 A"/>
    <property type="chains" value="AW=1-157"/>
</dbReference>
<dbReference type="PDB" id="6P5N">
    <property type="method" value="EM"/>
    <property type="resolution" value="3.20 A"/>
    <property type="chains" value="AW=1-157"/>
</dbReference>
<dbReference type="PDB" id="6R5Q">
    <property type="method" value="EM"/>
    <property type="resolution" value="3.00 A"/>
    <property type="chains" value="W=1-121"/>
</dbReference>
<dbReference type="PDB" id="6R6G">
    <property type="method" value="EM"/>
    <property type="resolution" value="3.70 A"/>
    <property type="chains" value="W=1-121"/>
</dbReference>
<dbReference type="PDB" id="6R6P">
    <property type="method" value="EM"/>
    <property type="resolution" value="3.10 A"/>
    <property type="chains" value="W=1-63"/>
</dbReference>
<dbReference type="PDB" id="6R7Q">
    <property type="method" value="EM"/>
    <property type="resolution" value="3.90 A"/>
    <property type="chains" value="W=1-121"/>
</dbReference>
<dbReference type="PDB" id="6SGC">
    <property type="method" value="EM"/>
    <property type="resolution" value="2.80 A"/>
    <property type="chains" value="W2=1-157"/>
</dbReference>
<dbReference type="PDB" id="6T59">
    <property type="method" value="EM"/>
    <property type="resolution" value="3.11 A"/>
    <property type="chains" value="W3=1-157"/>
</dbReference>
<dbReference type="PDB" id="6ZVK">
    <property type="method" value="EM"/>
    <property type="resolution" value="3.49 A"/>
    <property type="chains" value="l2=1-63"/>
</dbReference>
<dbReference type="PDB" id="7A01">
    <property type="method" value="EM"/>
    <property type="resolution" value="3.60 A"/>
    <property type="chains" value="l2=1-63"/>
</dbReference>
<dbReference type="PDB" id="7MDZ">
    <property type="method" value="EM"/>
    <property type="resolution" value="3.20 A"/>
    <property type="chains" value="W=1-157"/>
</dbReference>
<dbReference type="PDB" id="7NFX">
    <property type="method" value="EM"/>
    <property type="resolution" value="3.20 A"/>
    <property type="chains" value="W=1-63"/>
</dbReference>
<dbReference type="PDB" id="7O7Y">
    <property type="method" value="EM"/>
    <property type="resolution" value="2.20 A"/>
    <property type="chains" value="BW=1-157"/>
</dbReference>
<dbReference type="PDB" id="7O7Z">
    <property type="method" value="EM"/>
    <property type="resolution" value="2.40 A"/>
    <property type="chains" value="BW=1-157"/>
</dbReference>
<dbReference type="PDB" id="7O80">
    <property type="method" value="EM"/>
    <property type="resolution" value="2.90 A"/>
    <property type="chains" value="BW=1-157"/>
</dbReference>
<dbReference type="PDB" id="7O81">
    <property type="method" value="EM"/>
    <property type="resolution" value="3.10 A"/>
    <property type="chains" value="BW=1-157"/>
</dbReference>
<dbReference type="PDB" id="7OBR">
    <property type="method" value="EM"/>
    <property type="resolution" value="2.80 A"/>
    <property type="chains" value="W=1-63"/>
</dbReference>
<dbReference type="PDB" id="7OYD">
    <property type="method" value="EM"/>
    <property type="resolution" value="2.30 A"/>
    <property type="chains" value="W=1-157"/>
</dbReference>
<dbReference type="PDB" id="7QWQ">
    <property type="method" value="EM"/>
    <property type="resolution" value="2.83 A"/>
    <property type="chains" value="W=1-157"/>
</dbReference>
<dbReference type="PDB" id="7QWR">
    <property type="method" value="EM"/>
    <property type="resolution" value="2.90 A"/>
    <property type="chains" value="W=1-157"/>
</dbReference>
<dbReference type="PDB" id="7QWS">
    <property type="method" value="EM"/>
    <property type="resolution" value="3.40 A"/>
    <property type="chains" value="W=1-157"/>
</dbReference>
<dbReference type="PDB" id="7TM3">
    <property type="method" value="EM"/>
    <property type="resolution" value="3.25 A"/>
    <property type="chains" value="W=1-157"/>
</dbReference>
<dbReference type="PDB" id="7TOQ">
    <property type="method" value="EM"/>
    <property type="resolution" value="3.10 A"/>
    <property type="chains" value="AL24=1-63"/>
</dbReference>
<dbReference type="PDB" id="7TOR">
    <property type="method" value="EM"/>
    <property type="resolution" value="2.90 A"/>
    <property type="chains" value="AL24=1-121"/>
</dbReference>
<dbReference type="PDB" id="7TUT">
    <property type="method" value="EM"/>
    <property type="resolution" value="3.88 A"/>
    <property type="chains" value="W=1-157"/>
</dbReference>
<dbReference type="PDB" id="7UCJ">
    <property type="method" value="EM"/>
    <property type="resolution" value="3.10 A"/>
    <property type="chains" value="W=2-96"/>
</dbReference>
<dbReference type="PDB" id="7UCK">
    <property type="method" value="EM"/>
    <property type="resolution" value="2.80 A"/>
    <property type="chains" value="W=1-121"/>
</dbReference>
<dbReference type="PDB" id="7ZJW">
    <property type="method" value="EM"/>
    <property type="resolution" value="2.80 A"/>
    <property type="chains" value="LZ=1-157"/>
</dbReference>
<dbReference type="PDB" id="7ZJX">
    <property type="method" value="EM"/>
    <property type="resolution" value="3.10 A"/>
    <property type="chains" value="LZ=1-157"/>
</dbReference>
<dbReference type="PDB" id="8B5L">
    <property type="method" value="EM"/>
    <property type="resolution" value="2.86 A"/>
    <property type="chains" value="W=1-157"/>
</dbReference>
<dbReference type="PDB" id="8B6C">
    <property type="method" value="EM"/>
    <property type="resolution" value="2.79 A"/>
    <property type="chains" value="W=1-157"/>
</dbReference>
<dbReference type="PDB" id="8BPO">
    <property type="method" value="EM"/>
    <property type="resolution" value="2.80 A"/>
    <property type="chains" value="V2=1-157"/>
</dbReference>
<dbReference type="PDB" id="8BTK">
    <property type="method" value="EM"/>
    <property type="resolution" value="3.50 A"/>
    <property type="chains" value="BW=1-157"/>
</dbReference>
<dbReference type="PDB" id="8P2K">
    <property type="method" value="EM"/>
    <property type="resolution" value="2.90 A"/>
    <property type="chains" value="BW=1-157"/>
</dbReference>
<dbReference type="PDB" id="8RJB">
    <property type="method" value="EM"/>
    <property type="resolution" value="2.69 A"/>
    <property type="chains" value="W=1-157"/>
</dbReference>
<dbReference type="PDB" id="8RJC">
    <property type="method" value="EM"/>
    <property type="resolution" value="2.90 A"/>
    <property type="chains" value="W=1-157"/>
</dbReference>
<dbReference type="PDB" id="8RJD">
    <property type="method" value="EM"/>
    <property type="resolution" value="2.79 A"/>
    <property type="chains" value="W=1-157"/>
</dbReference>
<dbReference type="PDB" id="8SCB">
    <property type="method" value="EM"/>
    <property type="resolution" value="2.50 A"/>
    <property type="chains" value="W=1-157"/>
</dbReference>
<dbReference type="PDB" id="8VFT">
    <property type="method" value="EM"/>
    <property type="resolution" value="3.30 A"/>
    <property type="chains" value="W=1-157"/>
</dbReference>
<dbReference type="PDB" id="9BDL">
    <property type="method" value="EM"/>
    <property type="resolution" value="2.80 A"/>
    <property type="chains" value="AL24=1-121"/>
</dbReference>
<dbReference type="PDB" id="9BDN">
    <property type="method" value="EM"/>
    <property type="resolution" value="3.10 A"/>
    <property type="chains" value="AL24=1-121"/>
</dbReference>
<dbReference type="PDB" id="9BDP">
    <property type="method" value="EM"/>
    <property type="resolution" value="3.70 A"/>
    <property type="chains" value="AL24=1-121"/>
</dbReference>
<dbReference type="PDB" id="9F1B">
    <property type="method" value="EM"/>
    <property type="resolution" value="3.01 A"/>
    <property type="chains" value="BW=1-157"/>
</dbReference>
<dbReference type="PDB" id="9F1C">
    <property type="method" value="EM"/>
    <property type="resolution" value="3.78 A"/>
    <property type="chains" value="BW=1-157"/>
</dbReference>
<dbReference type="PDB" id="9F1D">
    <property type="method" value="EM"/>
    <property type="resolution" value="3.26 A"/>
    <property type="chains" value="BW=1-157"/>
</dbReference>
<dbReference type="PDBsum" id="5LZS"/>
<dbReference type="PDBsum" id="5LZT"/>
<dbReference type="PDBsum" id="5LZU"/>
<dbReference type="PDBsum" id="5LZV"/>
<dbReference type="PDBsum" id="5LZW"/>
<dbReference type="PDBsum" id="5LZX"/>
<dbReference type="PDBsum" id="5LZY"/>
<dbReference type="PDBsum" id="5LZZ"/>
<dbReference type="PDBsum" id="6D90"/>
<dbReference type="PDBsum" id="6D9J"/>
<dbReference type="PDBsum" id="6FTG"/>
<dbReference type="PDBsum" id="6FTI"/>
<dbReference type="PDBsum" id="6FTJ"/>
<dbReference type="PDBsum" id="6GZ3"/>
<dbReference type="PDBsum" id="6HCF"/>
<dbReference type="PDBsum" id="6HCM"/>
<dbReference type="PDBsum" id="6MTB"/>
<dbReference type="PDBsum" id="6MTC"/>
<dbReference type="PDBsum" id="6MTD"/>
<dbReference type="PDBsum" id="6MTE"/>
<dbReference type="PDBsum" id="6P5I"/>
<dbReference type="PDBsum" id="6P5J"/>
<dbReference type="PDBsum" id="6P5K"/>
<dbReference type="PDBsum" id="6P5N"/>
<dbReference type="PDBsum" id="6R5Q"/>
<dbReference type="PDBsum" id="6R6G"/>
<dbReference type="PDBsum" id="6R6P"/>
<dbReference type="PDBsum" id="6R7Q"/>
<dbReference type="PDBsum" id="6SGC"/>
<dbReference type="PDBsum" id="6T59"/>
<dbReference type="PDBsum" id="6ZVK"/>
<dbReference type="PDBsum" id="7A01"/>
<dbReference type="PDBsum" id="7MDZ"/>
<dbReference type="PDBsum" id="7NFX"/>
<dbReference type="PDBsum" id="7O7Y"/>
<dbReference type="PDBsum" id="7O7Z"/>
<dbReference type="PDBsum" id="7O80"/>
<dbReference type="PDBsum" id="7O81"/>
<dbReference type="PDBsum" id="7OBR"/>
<dbReference type="PDBsum" id="7OYD"/>
<dbReference type="PDBsum" id="7QWQ"/>
<dbReference type="PDBsum" id="7QWR"/>
<dbReference type="PDBsum" id="7QWS"/>
<dbReference type="PDBsum" id="7TM3"/>
<dbReference type="PDBsum" id="7TOQ"/>
<dbReference type="PDBsum" id="7TOR"/>
<dbReference type="PDBsum" id="7TUT"/>
<dbReference type="PDBsum" id="7UCJ"/>
<dbReference type="PDBsum" id="7UCK"/>
<dbReference type="PDBsum" id="7ZJW"/>
<dbReference type="PDBsum" id="7ZJX"/>
<dbReference type="PDBsum" id="8B5L"/>
<dbReference type="PDBsum" id="8B6C"/>
<dbReference type="PDBsum" id="8BPO"/>
<dbReference type="PDBsum" id="8BTK"/>
<dbReference type="PDBsum" id="8P2K"/>
<dbReference type="PDBsum" id="8RJB"/>
<dbReference type="PDBsum" id="8RJC"/>
<dbReference type="PDBsum" id="8RJD"/>
<dbReference type="PDBsum" id="8SCB"/>
<dbReference type="PDBsum" id="8VFT"/>
<dbReference type="PDBsum" id="9BDL"/>
<dbReference type="PDBsum" id="9BDN"/>
<dbReference type="PDBsum" id="9BDP"/>
<dbReference type="PDBsum" id="9F1B"/>
<dbReference type="PDBsum" id="9F1C"/>
<dbReference type="PDBsum" id="9F1D"/>
<dbReference type="EMDB" id="EMD-0098"/>
<dbReference type="EMDB" id="EMD-0099"/>
<dbReference type="EMDB" id="EMD-0100"/>
<dbReference type="EMDB" id="EMD-0192"/>
<dbReference type="EMDB" id="EMD-0195"/>
<dbReference type="EMDB" id="EMD-10181"/>
<dbReference type="EMDB" id="EMD-10380"/>
<dbReference type="EMDB" id="EMD-11459"/>
<dbReference type="EMDB" id="EMD-11590"/>
<dbReference type="EMDB" id="EMD-12303"/>
<dbReference type="EMDB" id="EMD-12756"/>
<dbReference type="EMDB" id="EMD-12757"/>
<dbReference type="EMDB" id="EMD-12758"/>
<dbReference type="EMDB" id="EMD-12759"/>
<dbReference type="EMDB" id="EMD-12801"/>
<dbReference type="EMDB" id="EMD-13114"/>
<dbReference type="EMDB" id="EMD-14191"/>
<dbReference type="EMDB" id="EMD-14192"/>
<dbReference type="EMDB" id="EMD-14193"/>
<dbReference type="EMDB" id="EMD-14751"/>
<dbReference type="EMDB" id="EMD-14752"/>
<dbReference type="EMDB" id="EMD-15860"/>
<dbReference type="EMDB" id="EMD-15863"/>
<dbReference type="EMDB" id="EMD-16155"/>
<dbReference type="EMDB" id="EMD-16232"/>
<dbReference type="EMDB" id="EMD-17367"/>
<dbReference type="EMDB" id="EMD-19195"/>
<dbReference type="EMDB" id="EMD-19197"/>
<dbReference type="EMDB" id="EMD-19198"/>
<dbReference type="EMDB" id="EMD-20255"/>
<dbReference type="EMDB" id="EMD-20256"/>
<dbReference type="EMDB" id="EMD-20257"/>
<dbReference type="EMDB" id="EMD-20258"/>
<dbReference type="EMDB" id="EMD-23785"/>
<dbReference type="EMDB" id="EMD-25994"/>
<dbReference type="EMDB" id="EMD-26035"/>
<dbReference type="EMDB" id="EMD-26036"/>
<dbReference type="EMDB" id="EMD-26133"/>
<dbReference type="EMDB" id="EMD-26444"/>
<dbReference type="EMDB" id="EMD-26445"/>
<dbReference type="EMDB" id="EMD-40344"/>
<dbReference type="EMDB" id="EMD-4130"/>
<dbReference type="EMDB" id="EMD-4131"/>
<dbReference type="EMDB" id="EMD-4132"/>
<dbReference type="EMDB" id="EMD-4133"/>
<dbReference type="EMDB" id="EMD-4134"/>
<dbReference type="EMDB" id="EMD-4135"/>
<dbReference type="EMDB" id="EMD-4136"/>
<dbReference type="EMDB" id="EMD-4137"/>
<dbReference type="EMDB" id="EMD-4300"/>
<dbReference type="EMDB" id="EMD-4315"/>
<dbReference type="EMDB" id="EMD-4316"/>
<dbReference type="EMDB" id="EMD-4317"/>
<dbReference type="EMDB" id="EMD-43189"/>
<dbReference type="EMDB" id="EMD-44461"/>
<dbReference type="EMDB" id="EMD-44463"/>
<dbReference type="EMDB" id="EMD-44464"/>
<dbReference type="EMDB" id="EMD-4729"/>
<dbReference type="EMDB" id="EMD-4735"/>
<dbReference type="EMDB" id="EMD-4737"/>
<dbReference type="EMDB" id="EMD-4745"/>
<dbReference type="EMDB" id="EMD-50124"/>
<dbReference type="EMDB" id="EMD-50125"/>
<dbReference type="EMDB" id="EMD-50126"/>
<dbReference type="EMDB" id="EMD-7834"/>
<dbReference type="EMDB" id="EMD-7836"/>
<dbReference type="EMDB" id="EMD-9237"/>
<dbReference type="EMDB" id="EMD-9239"/>
<dbReference type="EMDB" id="EMD-9240"/>
<dbReference type="EMDB" id="EMD-9242"/>
<dbReference type="SMR" id="G1SE28"/>
<dbReference type="FunCoup" id="G1SE28">
    <property type="interactions" value="1450"/>
</dbReference>
<dbReference type="IntAct" id="G1SE28">
    <property type="interactions" value="1"/>
</dbReference>
<dbReference type="STRING" id="9986.ENSOCUP00000000686"/>
<dbReference type="PaxDb" id="9986-ENSOCUP00000000686"/>
<dbReference type="Ensembl" id="ENSOCUT00000000791.2">
    <property type="protein sequence ID" value="ENSOCUP00000000686.2"/>
    <property type="gene ID" value="ENSOCUG00000000791.3"/>
</dbReference>
<dbReference type="GeneID" id="100357247"/>
<dbReference type="KEGG" id="ocu:100357247"/>
<dbReference type="CTD" id="6152"/>
<dbReference type="eggNOG" id="KOG1722">
    <property type="taxonomic scope" value="Eukaryota"/>
</dbReference>
<dbReference type="GeneTree" id="ENSGT00950000183105"/>
<dbReference type="HOGENOM" id="CLU_106411_1_0_1"/>
<dbReference type="InParanoid" id="G1SE28"/>
<dbReference type="OMA" id="YARTDWK"/>
<dbReference type="OrthoDB" id="1727108at2759"/>
<dbReference type="TreeFam" id="TF312933"/>
<dbReference type="Proteomes" id="UP000001811">
    <property type="component" value="Chromosome 14"/>
</dbReference>
<dbReference type="Bgee" id="ENSOCUG00000000791">
    <property type="expression patterns" value="Expressed in left lung and 15 other cell types or tissues"/>
</dbReference>
<dbReference type="GO" id="GO:0022625">
    <property type="term" value="C:cytosolic large ribosomal subunit"/>
    <property type="evidence" value="ECO:0007669"/>
    <property type="project" value="TreeGrafter"/>
</dbReference>
<dbReference type="GO" id="GO:0003729">
    <property type="term" value="F:mRNA binding"/>
    <property type="evidence" value="ECO:0007669"/>
    <property type="project" value="TreeGrafter"/>
</dbReference>
<dbReference type="GO" id="GO:0003735">
    <property type="term" value="F:structural constituent of ribosome"/>
    <property type="evidence" value="ECO:0007669"/>
    <property type="project" value="InterPro"/>
</dbReference>
<dbReference type="GO" id="GO:0002181">
    <property type="term" value="P:cytoplasmic translation"/>
    <property type="evidence" value="ECO:0007669"/>
    <property type="project" value="TreeGrafter"/>
</dbReference>
<dbReference type="CDD" id="cd00472">
    <property type="entry name" value="Ribosomal_L24e_L24"/>
    <property type="match status" value="1"/>
</dbReference>
<dbReference type="FunFam" id="2.30.170.20:FF:000004">
    <property type="entry name" value="60S ribosomal protein l24"/>
    <property type="match status" value="1"/>
</dbReference>
<dbReference type="Gene3D" id="6.10.250.1270">
    <property type="match status" value="1"/>
</dbReference>
<dbReference type="Gene3D" id="2.30.170.20">
    <property type="entry name" value="Ribosomal protein L24e"/>
    <property type="match status" value="1"/>
</dbReference>
<dbReference type="InterPro" id="IPR038630">
    <property type="entry name" value="L24e/L24_sf"/>
</dbReference>
<dbReference type="InterPro" id="IPR056366">
    <property type="entry name" value="Ribosomal_eL24"/>
</dbReference>
<dbReference type="InterPro" id="IPR000988">
    <property type="entry name" value="Ribosomal_eL24-rel_N"/>
</dbReference>
<dbReference type="InterPro" id="IPR023442">
    <property type="entry name" value="Ribosomal_eL24_CS"/>
</dbReference>
<dbReference type="InterPro" id="IPR011017">
    <property type="entry name" value="TRASH_dom"/>
</dbReference>
<dbReference type="PANTHER" id="PTHR10792">
    <property type="entry name" value="60S RIBOSOMAL PROTEIN L24"/>
    <property type="match status" value="1"/>
</dbReference>
<dbReference type="PANTHER" id="PTHR10792:SF1">
    <property type="entry name" value="RIBOSOMAL PROTEIN L24"/>
    <property type="match status" value="1"/>
</dbReference>
<dbReference type="Pfam" id="PF01246">
    <property type="entry name" value="Ribosomal_L24e"/>
    <property type="match status" value="1"/>
</dbReference>
<dbReference type="SMART" id="SM00746">
    <property type="entry name" value="TRASH"/>
    <property type="match status" value="1"/>
</dbReference>
<dbReference type="SUPFAM" id="SSF57716">
    <property type="entry name" value="Glucocorticoid receptor-like (DNA-binding domain)"/>
    <property type="match status" value="1"/>
</dbReference>
<dbReference type="PROSITE" id="PS01073">
    <property type="entry name" value="RIBOSOMAL_L24E"/>
    <property type="match status" value="1"/>
</dbReference>